<name>LOLA_COXBU</name>
<protein>
    <recommendedName>
        <fullName>Outer-membrane lipoprotein carrier protein</fullName>
    </recommendedName>
</protein>
<comment type="function">
    <text evidence="1">Participates in the translocation of lipoproteins from the inner membrane to the outer membrane. Only forms a complex with a lipoprotein if the residue after the N-terminal Cys is not an aspartate (The Asp acts as a targeting signal to indicate that the lipoprotein should stay in the inner membrane) (By similarity).</text>
</comment>
<comment type="subunit">
    <text evidence="1">Monomer.</text>
</comment>
<comment type="subcellular location">
    <subcellularLocation>
        <location evidence="1">Periplasm</location>
    </subcellularLocation>
</comment>
<comment type="similarity">
    <text evidence="3">Belongs to the LolA family.</text>
</comment>
<feature type="signal peptide" evidence="2">
    <location>
        <begin position="1"/>
        <end position="26"/>
    </location>
</feature>
<feature type="chain" id="PRO_0000018255" description="Outer-membrane lipoprotein carrier protein">
    <location>
        <begin position="27"/>
        <end position="211"/>
    </location>
</feature>
<sequence>MNTIKILIGLLGIFLFSLSGIVSAQSDATTQLSQLLSNFRTYQAKFNQITFDGQDRVIQQSHGRVMIMRPGRFRWETDSPTKQIIITNGKTLWVYDVDLSQATQQPLAQKTNINPASLLSGSVKDLKQKFTITISPTPDAATFQLVPNLGKSLNFNWIRLKFSKKQLTEMTVLNNLDERSIFQFSQIKVNAPLSSTLFEFKPSRGIDVVKQ</sequence>
<evidence type="ECO:0000250" key="1"/>
<evidence type="ECO:0000255" key="2"/>
<evidence type="ECO:0000305" key="3"/>
<accession>P39917</accession>
<gene>
    <name type="primary">lolA</name>
    <name type="ordered locus">CBU_1190</name>
</gene>
<reference key="1">
    <citation type="thesis" date="1994" institute="Justus Liebig University / Frankfurt" country="Germany">
        <authorList>
            <person name="Oswald W."/>
        </authorList>
    </citation>
    <scope>NUCLEOTIDE SEQUENCE [GENOMIC DNA]</scope>
    <source>
        <strain>Nine Mile phase I / Bratislava</strain>
    </source>
</reference>
<reference key="2">
    <citation type="journal article" date="2003" name="Proc. Natl. Acad. Sci. U.S.A.">
        <title>Complete genome sequence of the Q-fever pathogen, Coxiella burnetii.</title>
        <authorList>
            <person name="Seshadri R."/>
            <person name="Paulsen I.T."/>
            <person name="Eisen J.A."/>
            <person name="Read T.D."/>
            <person name="Nelson K.E."/>
            <person name="Nelson W.C."/>
            <person name="Ward N.L."/>
            <person name="Tettelin H."/>
            <person name="Davidsen T.M."/>
            <person name="Beanan M.J."/>
            <person name="DeBoy R.T."/>
            <person name="Daugherty S.C."/>
            <person name="Brinkac L.M."/>
            <person name="Madupu R."/>
            <person name="Dodson R.J."/>
            <person name="Khouri H.M."/>
            <person name="Lee K.H."/>
            <person name="Carty H.A."/>
            <person name="Scanlan D."/>
            <person name="Heinzen R.A."/>
            <person name="Thompson H.A."/>
            <person name="Samuel J.E."/>
            <person name="Fraser C.M."/>
            <person name="Heidelberg J.F."/>
        </authorList>
    </citation>
    <scope>NUCLEOTIDE SEQUENCE [LARGE SCALE GENOMIC DNA]</scope>
    <source>
        <strain>RSA 493 / Nine Mile phase I</strain>
    </source>
</reference>
<reference key="3">
    <citation type="journal article" date="2009" name="Clin. Microbiol. Infect.">
        <title>In silico prediction and identification of outer membrane proteins and lipoproteins from Coxiella burnetii by the mass spectrometry techniques.</title>
        <authorList>
            <person name="Flores-Ramirez G."/>
            <person name="Toman R."/>
            <person name="Sekeyova Z."/>
            <person name="Skultety L."/>
        </authorList>
    </citation>
    <scope>IDENTIFICATION BY MASS SPECTROMETRY</scope>
    <source>
        <strain>RSA 493 / Nine Mile phase I</strain>
    </source>
</reference>
<organism>
    <name type="scientific">Coxiella burnetii (strain RSA 493 / Nine Mile phase I)</name>
    <dbReference type="NCBI Taxonomy" id="227377"/>
    <lineage>
        <taxon>Bacteria</taxon>
        <taxon>Pseudomonadati</taxon>
        <taxon>Pseudomonadota</taxon>
        <taxon>Gammaproteobacteria</taxon>
        <taxon>Legionellales</taxon>
        <taxon>Coxiellaceae</taxon>
        <taxon>Coxiella</taxon>
    </lineage>
</organism>
<dbReference type="EMBL" id="X75627">
    <property type="protein sequence ID" value="CAA53290.1"/>
    <property type="molecule type" value="Genomic_DNA"/>
</dbReference>
<dbReference type="EMBL" id="AE016828">
    <property type="protein sequence ID" value="AAO90699.1"/>
    <property type="molecule type" value="Genomic_DNA"/>
</dbReference>
<dbReference type="PIR" id="S31760">
    <property type="entry name" value="S43133"/>
</dbReference>
<dbReference type="RefSeq" id="NP_820185.1">
    <property type="nucleotide sequence ID" value="NC_002971.4"/>
</dbReference>
<dbReference type="RefSeq" id="WP_010958062.1">
    <property type="nucleotide sequence ID" value="NC_002971.4"/>
</dbReference>
<dbReference type="SMR" id="P39917"/>
<dbReference type="STRING" id="227377.CBU_1190"/>
<dbReference type="EnsemblBacteria" id="AAO90699">
    <property type="protein sequence ID" value="AAO90699"/>
    <property type="gene ID" value="CBU_1190"/>
</dbReference>
<dbReference type="GeneID" id="1209094"/>
<dbReference type="KEGG" id="cbu:CBU_1190"/>
<dbReference type="PATRIC" id="fig|227377.7.peg.1188"/>
<dbReference type="eggNOG" id="COG2834">
    <property type="taxonomic scope" value="Bacteria"/>
</dbReference>
<dbReference type="HOGENOM" id="CLU_087560_0_0_6"/>
<dbReference type="OrthoDB" id="9787361at2"/>
<dbReference type="Proteomes" id="UP000002671">
    <property type="component" value="Chromosome"/>
</dbReference>
<dbReference type="GO" id="GO:0030288">
    <property type="term" value="C:outer membrane-bounded periplasmic space"/>
    <property type="evidence" value="ECO:0000318"/>
    <property type="project" value="GO_Central"/>
</dbReference>
<dbReference type="GO" id="GO:0044874">
    <property type="term" value="P:lipoprotein localization to outer membrane"/>
    <property type="evidence" value="ECO:0000318"/>
    <property type="project" value="GO_Central"/>
</dbReference>
<dbReference type="GO" id="GO:0042953">
    <property type="term" value="P:lipoprotein transport"/>
    <property type="evidence" value="ECO:0000318"/>
    <property type="project" value="GO_Central"/>
</dbReference>
<dbReference type="CDD" id="cd16325">
    <property type="entry name" value="LolA"/>
    <property type="match status" value="1"/>
</dbReference>
<dbReference type="FunFam" id="2.50.20.10:FF:000015">
    <property type="entry name" value="Outer-membrane lipoprotein carrier protein"/>
    <property type="match status" value="1"/>
</dbReference>
<dbReference type="Gene3D" id="2.50.20.10">
    <property type="entry name" value="Lipoprotein localisation LolA/LolB/LppX"/>
    <property type="match status" value="1"/>
</dbReference>
<dbReference type="HAMAP" id="MF_00240">
    <property type="entry name" value="LolA"/>
    <property type="match status" value="1"/>
</dbReference>
<dbReference type="InterPro" id="IPR029046">
    <property type="entry name" value="LolA/LolB/LppX"/>
</dbReference>
<dbReference type="InterPro" id="IPR004564">
    <property type="entry name" value="OM_lipoprot_carrier_LolA-like"/>
</dbReference>
<dbReference type="InterPro" id="IPR018323">
    <property type="entry name" value="OM_lipoprot_carrier_LolA_Pbac"/>
</dbReference>
<dbReference type="NCBIfam" id="TIGR00547">
    <property type="entry name" value="lolA"/>
    <property type="match status" value="1"/>
</dbReference>
<dbReference type="PANTHER" id="PTHR35869">
    <property type="entry name" value="OUTER-MEMBRANE LIPOPROTEIN CARRIER PROTEIN"/>
    <property type="match status" value="1"/>
</dbReference>
<dbReference type="PANTHER" id="PTHR35869:SF1">
    <property type="entry name" value="OUTER-MEMBRANE LIPOPROTEIN CARRIER PROTEIN"/>
    <property type="match status" value="1"/>
</dbReference>
<dbReference type="Pfam" id="PF03548">
    <property type="entry name" value="LolA"/>
    <property type="match status" value="1"/>
</dbReference>
<dbReference type="SUPFAM" id="SSF89392">
    <property type="entry name" value="Prokaryotic lipoproteins and lipoprotein localization factors"/>
    <property type="match status" value="1"/>
</dbReference>
<keyword id="KW-0143">Chaperone</keyword>
<keyword id="KW-0574">Periplasm</keyword>
<keyword id="KW-0653">Protein transport</keyword>
<keyword id="KW-1185">Reference proteome</keyword>
<keyword id="KW-0732">Signal</keyword>
<keyword id="KW-0813">Transport</keyword>
<proteinExistence type="evidence at protein level"/>